<protein>
    <recommendedName>
        <fullName evidence="1">Probable lipid kinase YegS</fullName>
        <ecNumber evidence="1">2.7.1.-</ecNumber>
    </recommendedName>
</protein>
<comment type="function">
    <text evidence="1">Probably phosphorylates lipids; the in vivo substrate is unknown.</text>
</comment>
<comment type="cofactor">
    <cofactor evidence="1">
        <name>Mg(2+)</name>
        <dbReference type="ChEBI" id="CHEBI:18420"/>
    </cofactor>
    <cofactor evidence="1">
        <name>Ca(2+)</name>
        <dbReference type="ChEBI" id="CHEBI:29108"/>
    </cofactor>
    <text evidence="1">Binds 1 Mg(2+) ion per subunit. Ca(2+) may be able to substitute.</text>
</comment>
<comment type="subcellular location">
    <subcellularLocation>
        <location evidence="1">Cytoplasm</location>
    </subcellularLocation>
</comment>
<comment type="similarity">
    <text evidence="1">Belongs to the diacylglycerol/lipid kinase family. YegS lipid kinase subfamily.</text>
</comment>
<sequence length="299" mass="32018">MAEFPASLLILNGKSTDNLPLREAIMLLREEGMTIHVRVTWEKGDAARYVEEARKLGVATVIAGGGDGTINEVSTALIQCEGDDIPALGILPLGTANDFATSVGIPEALDKALKLAIAGNAIAIDMAQVNKQTCFINMATGGFGTRITTETPEKLKAALGGVSYIIHGLMRMDTLQPDRCEIRGENFHWQGDALVIGIGNGRQAGGGQQLCPNALINDGLLQLRIFTGDEIIPTLVSTLKSDEDNPNIIEGASSWFDIQAPHEITFNLDGEPLSGQNFHIEILPAALRCRLPPDCPLLR</sequence>
<accession>B7MEE4</accession>
<dbReference type="EC" id="2.7.1.-" evidence="1"/>
<dbReference type="EMBL" id="CU928161">
    <property type="protein sequence ID" value="CAR03517.1"/>
    <property type="molecule type" value="Genomic_DNA"/>
</dbReference>
<dbReference type="RefSeq" id="WP_000807360.1">
    <property type="nucleotide sequence ID" value="NC_011742.1"/>
</dbReference>
<dbReference type="SMR" id="B7MEE4"/>
<dbReference type="KEGG" id="ecz:ECS88_2231"/>
<dbReference type="HOGENOM" id="CLU_045532_1_1_6"/>
<dbReference type="Proteomes" id="UP000000747">
    <property type="component" value="Chromosome"/>
</dbReference>
<dbReference type="GO" id="GO:0005737">
    <property type="term" value="C:cytoplasm"/>
    <property type="evidence" value="ECO:0007669"/>
    <property type="project" value="UniProtKB-SubCell"/>
</dbReference>
<dbReference type="GO" id="GO:0005886">
    <property type="term" value="C:plasma membrane"/>
    <property type="evidence" value="ECO:0007669"/>
    <property type="project" value="TreeGrafter"/>
</dbReference>
<dbReference type="GO" id="GO:0005524">
    <property type="term" value="F:ATP binding"/>
    <property type="evidence" value="ECO:0007669"/>
    <property type="project" value="UniProtKB-UniRule"/>
</dbReference>
<dbReference type="GO" id="GO:0001727">
    <property type="term" value="F:lipid kinase activity"/>
    <property type="evidence" value="ECO:0007669"/>
    <property type="project" value="UniProtKB-UniRule"/>
</dbReference>
<dbReference type="GO" id="GO:0000287">
    <property type="term" value="F:magnesium ion binding"/>
    <property type="evidence" value="ECO:0007669"/>
    <property type="project" value="UniProtKB-UniRule"/>
</dbReference>
<dbReference type="GO" id="GO:0008654">
    <property type="term" value="P:phospholipid biosynthetic process"/>
    <property type="evidence" value="ECO:0007669"/>
    <property type="project" value="UniProtKB-UniRule"/>
</dbReference>
<dbReference type="FunFam" id="2.60.200.40:FF:000008">
    <property type="entry name" value="Probable lipid kinase YegS"/>
    <property type="match status" value="1"/>
</dbReference>
<dbReference type="FunFam" id="3.40.50.10330:FF:000008">
    <property type="entry name" value="Probable lipid kinase YegS"/>
    <property type="match status" value="1"/>
</dbReference>
<dbReference type="Gene3D" id="2.60.200.40">
    <property type="match status" value="1"/>
</dbReference>
<dbReference type="Gene3D" id="3.40.50.10330">
    <property type="entry name" value="Probable inorganic polyphosphate/atp-NAD kinase, domain 1"/>
    <property type="match status" value="1"/>
</dbReference>
<dbReference type="HAMAP" id="MF_01377">
    <property type="entry name" value="YegS"/>
    <property type="match status" value="1"/>
</dbReference>
<dbReference type="InterPro" id="IPR017438">
    <property type="entry name" value="ATP-NAD_kinase_N"/>
</dbReference>
<dbReference type="InterPro" id="IPR005218">
    <property type="entry name" value="Diacylglycerol/lipid_kinase"/>
</dbReference>
<dbReference type="InterPro" id="IPR001206">
    <property type="entry name" value="Diacylglycerol_kinase_cat_dom"/>
</dbReference>
<dbReference type="InterPro" id="IPR022433">
    <property type="entry name" value="Lip_kinase_YegS"/>
</dbReference>
<dbReference type="InterPro" id="IPR050187">
    <property type="entry name" value="Lipid_Phosphate_FormReg"/>
</dbReference>
<dbReference type="InterPro" id="IPR016064">
    <property type="entry name" value="NAD/diacylglycerol_kinase_sf"/>
</dbReference>
<dbReference type="InterPro" id="IPR045540">
    <property type="entry name" value="YegS/DAGK_C"/>
</dbReference>
<dbReference type="NCBIfam" id="TIGR03702">
    <property type="entry name" value="lip_kinase_YegS"/>
    <property type="match status" value="1"/>
</dbReference>
<dbReference type="NCBIfam" id="NF009602">
    <property type="entry name" value="PRK13054.1"/>
    <property type="match status" value="1"/>
</dbReference>
<dbReference type="NCBIfam" id="TIGR00147">
    <property type="entry name" value="YegS/Rv2252/BmrU family lipid kinase"/>
    <property type="match status" value="1"/>
</dbReference>
<dbReference type="PANTHER" id="PTHR12358:SF106">
    <property type="entry name" value="LIPID KINASE YEGS"/>
    <property type="match status" value="1"/>
</dbReference>
<dbReference type="PANTHER" id="PTHR12358">
    <property type="entry name" value="SPHINGOSINE KINASE"/>
    <property type="match status" value="1"/>
</dbReference>
<dbReference type="Pfam" id="PF00781">
    <property type="entry name" value="DAGK_cat"/>
    <property type="match status" value="1"/>
</dbReference>
<dbReference type="Pfam" id="PF19279">
    <property type="entry name" value="YegS_C"/>
    <property type="match status" value="1"/>
</dbReference>
<dbReference type="SMART" id="SM00046">
    <property type="entry name" value="DAGKc"/>
    <property type="match status" value="1"/>
</dbReference>
<dbReference type="SUPFAM" id="SSF111331">
    <property type="entry name" value="NAD kinase/diacylglycerol kinase-like"/>
    <property type="match status" value="1"/>
</dbReference>
<dbReference type="PROSITE" id="PS50146">
    <property type="entry name" value="DAGK"/>
    <property type="match status" value="1"/>
</dbReference>
<reference key="1">
    <citation type="journal article" date="2009" name="PLoS Genet.">
        <title>Organised genome dynamics in the Escherichia coli species results in highly diverse adaptive paths.</title>
        <authorList>
            <person name="Touchon M."/>
            <person name="Hoede C."/>
            <person name="Tenaillon O."/>
            <person name="Barbe V."/>
            <person name="Baeriswyl S."/>
            <person name="Bidet P."/>
            <person name="Bingen E."/>
            <person name="Bonacorsi S."/>
            <person name="Bouchier C."/>
            <person name="Bouvet O."/>
            <person name="Calteau A."/>
            <person name="Chiapello H."/>
            <person name="Clermont O."/>
            <person name="Cruveiller S."/>
            <person name="Danchin A."/>
            <person name="Diard M."/>
            <person name="Dossat C."/>
            <person name="Karoui M.E."/>
            <person name="Frapy E."/>
            <person name="Garry L."/>
            <person name="Ghigo J.M."/>
            <person name="Gilles A.M."/>
            <person name="Johnson J."/>
            <person name="Le Bouguenec C."/>
            <person name="Lescat M."/>
            <person name="Mangenot S."/>
            <person name="Martinez-Jehanne V."/>
            <person name="Matic I."/>
            <person name="Nassif X."/>
            <person name="Oztas S."/>
            <person name="Petit M.A."/>
            <person name="Pichon C."/>
            <person name="Rouy Z."/>
            <person name="Ruf C.S."/>
            <person name="Schneider D."/>
            <person name="Tourret J."/>
            <person name="Vacherie B."/>
            <person name="Vallenet D."/>
            <person name="Medigue C."/>
            <person name="Rocha E.P.C."/>
            <person name="Denamur E."/>
        </authorList>
    </citation>
    <scope>NUCLEOTIDE SEQUENCE [LARGE SCALE GENOMIC DNA]</scope>
    <source>
        <strain>S88 / ExPEC</strain>
    </source>
</reference>
<gene>
    <name evidence="1" type="primary">yegS</name>
    <name type="ordered locus">ECS88_2231</name>
</gene>
<name>YEGS_ECO45</name>
<proteinExistence type="inferred from homology"/>
<keyword id="KW-0067">ATP-binding</keyword>
<keyword id="KW-0963">Cytoplasm</keyword>
<keyword id="KW-0418">Kinase</keyword>
<keyword id="KW-0444">Lipid biosynthesis</keyword>
<keyword id="KW-0443">Lipid metabolism</keyword>
<keyword id="KW-0460">Magnesium</keyword>
<keyword id="KW-0479">Metal-binding</keyword>
<keyword id="KW-0547">Nucleotide-binding</keyword>
<keyword id="KW-0594">Phospholipid biosynthesis</keyword>
<keyword id="KW-1208">Phospholipid metabolism</keyword>
<keyword id="KW-1185">Reference proteome</keyword>
<keyword id="KW-0808">Transferase</keyword>
<organism>
    <name type="scientific">Escherichia coli O45:K1 (strain S88 / ExPEC)</name>
    <dbReference type="NCBI Taxonomy" id="585035"/>
    <lineage>
        <taxon>Bacteria</taxon>
        <taxon>Pseudomonadati</taxon>
        <taxon>Pseudomonadota</taxon>
        <taxon>Gammaproteobacteria</taxon>
        <taxon>Enterobacterales</taxon>
        <taxon>Enterobacteriaceae</taxon>
        <taxon>Escherichia</taxon>
    </lineage>
</organism>
<evidence type="ECO:0000255" key="1">
    <source>
        <dbReference type="HAMAP-Rule" id="MF_01377"/>
    </source>
</evidence>
<feature type="chain" id="PRO_1000144862" description="Probable lipid kinase YegS">
    <location>
        <begin position="1"/>
        <end position="299"/>
    </location>
</feature>
<feature type="domain" description="DAGKc" evidence="1">
    <location>
        <begin position="2"/>
        <end position="133"/>
    </location>
</feature>
<feature type="active site" description="Proton acceptor" evidence="1">
    <location>
        <position position="271"/>
    </location>
</feature>
<feature type="binding site" evidence="1">
    <location>
        <position position="40"/>
    </location>
    <ligand>
        <name>ATP</name>
        <dbReference type="ChEBI" id="CHEBI:30616"/>
    </ligand>
</feature>
<feature type="binding site" evidence="1">
    <location>
        <begin position="66"/>
        <end position="72"/>
    </location>
    <ligand>
        <name>ATP</name>
        <dbReference type="ChEBI" id="CHEBI:30616"/>
    </ligand>
</feature>
<feature type="binding site" evidence="1">
    <location>
        <position position="95"/>
    </location>
    <ligand>
        <name>ATP</name>
        <dbReference type="ChEBI" id="CHEBI:30616"/>
    </ligand>
</feature>
<feature type="binding site" evidence="1">
    <location>
        <position position="215"/>
    </location>
    <ligand>
        <name>Mg(2+)</name>
        <dbReference type="ChEBI" id="CHEBI:18420"/>
    </ligand>
</feature>
<feature type="binding site" evidence="1">
    <location>
        <position position="218"/>
    </location>
    <ligand>
        <name>Mg(2+)</name>
        <dbReference type="ChEBI" id="CHEBI:18420"/>
    </ligand>
</feature>
<feature type="binding site" evidence="1">
    <location>
        <position position="220"/>
    </location>
    <ligand>
        <name>Mg(2+)</name>
        <dbReference type="ChEBI" id="CHEBI:18420"/>
    </ligand>
</feature>